<dbReference type="EMBL" id="AK416785">
    <property type="protein sequence ID" value="BAM69126.1"/>
    <property type="molecule type" value="mRNA"/>
</dbReference>
<dbReference type="EMBL" id="AK416782">
    <property type="protein sequence ID" value="BAM69123.1"/>
    <property type="molecule type" value="mRNA"/>
</dbReference>
<dbReference type="EMBL" id="AK416781">
    <property type="protein sequence ID" value="BAM69122.1"/>
    <property type="molecule type" value="mRNA"/>
</dbReference>
<dbReference type="EMBL" id="AK416779">
    <property type="protein sequence ID" value="BAM69120.1"/>
    <property type="molecule type" value="mRNA"/>
</dbReference>
<dbReference type="EMBL" id="AK416787">
    <property type="protein sequence ID" value="BAM69128.1"/>
    <property type="molecule type" value="mRNA"/>
</dbReference>
<dbReference type="EMBL" id="AK416784">
    <property type="protein sequence ID" value="BAM69125.1"/>
    <property type="molecule type" value="mRNA"/>
</dbReference>
<dbReference type="EMBL" id="AK416783">
    <property type="protein sequence ID" value="BAM69124.1"/>
    <property type="molecule type" value="mRNA"/>
</dbReference>
<dbReference type="EMBL" id="AK416786">
    <property type="protein sequence ID" value="BAM69127.1"/>
    <property type="molecule type" value="mRNA"/>
</dbReference>
<dbReference type="EMBL" id="AK416780">
    <property type="protein sequence ID" value="BAM69121.1"/>
    <property type="molecule type" value="mRNA"/>
</dbReference>
<dbReference type="GO" id="GO:0005576">
    <property type="term" value="C:extracellular region"/>
    <property type="evidence" value="ECO:0007669"/>
    <property type="project" value="UniProtKB-SubCell"/>
</dbReference>
<dbReference type="GO" id="GO:0005178">
    <property type="term" value="F:integrin binding"/>
    <property type="evidence" value="ECO:0000314"/>
    <property type="project" value="UniProtKB"/>
</dbReference>
<dbReference type="GO" id="GO:0090729">
    <property type="term" value="F:toxin activity"/>
    <property type="evidence" value="ECO:0000314"/>
    <property type="project" value="UniProtKB"/>
</dbReference>
<dbReference type="GO" id="GO:0035899">
    <property type="term" value="P:suppression of blood coagulation in another organism"/>
    <property type="evidence" value="ECO:0000314"/>
    <property type="project" value="UniProtKB"/>
</dbReference>
<dbReference type="GO" id="GO:0035893">
    <property type="term" value="P:suppression of platelet aggregation in another organism"/>
    <property type="evidence" value="ECO:0000314"/>
    <property type="project" value="UniProtKB"/>
</dbReference>
<proteinExistence type="evidence at protein level"/>
<comment type="function">
    <text evidence="4">Inhibits collagen- and ADP-induced host platelet aggregation by blocking the binding of host integrin alpha-IIb/beta-3 (ITGA2B/ITGB3) to fibrinogen (PubMed:25724270). Inhibits the intrinsic blood coagulation pathway in the host by blocking the activity of host coagulation factor XIIa (F12) (PubMed:25724270).</text>
</comment>
<comment type="subcellular location">
    <subcellularLocation>
        <location evidence="6">Secreted</location>
    </subcellularLocation>
</comment>
<comment type="tissue specificity">
    <text evidence="3">Salivary gland.</text>
</comment>
<comment type="domain">
    <text evidence="4">The Arg-Gly-Asp (RGD) sequence serves as an integrin-binding motif and is required for blocking host platelet aggregation.</text>
</comment>
<name>RGDC_LUTAY</name>
<accession>L0MZ46</accession>
<accession>L0MXD7</accession>
<accession>L0MXR5</accession>
<accession>L0MYG3</accession>
<accession>L0MZ41</accession>
<accession>L0MZT1</accession>
<accession>L0MZT5</accession>
<sequence length="67" mass="7494">MNKIILFSAVFLALVFCAEAMPRESVNILNAENEPDDTVDIDEGLPDAFDEDYEQDGHNPYPCRGDC</sequence>
<feature type="signal peptide" evidence="1">
    <location>
        <begin position="1"/>
        <end position="20"/>
    </location>
</feature>
<feature type="chain" id="PRO_5003946374" description="Ayadualin" evidence="1">
    <location>
        <begin position="21"/>
        <end position="67"/>
    </location>
</feature>
<feature type="region of interest" description="Disordered" evidence="2">
    <location>
        <begin position="35"/>
        <end position="67"/>
    </location>
</feature>
<feature type="short sequence motif" description="Integrin-binding motif" evidence="4">
    <location>
        <begin position="64"/>
        <end position="66"/>
    </location>
</feature>
<feature type="compositionally biased region" description="Acidic residues" evidence="2">
    <location>
        <begin position="35"/>
        <end position="54"/>
    </location>
</feature>
<feature type="mutagenesis site" description="Abolishes the ability of the protein to interfere with the binding of host integrin to fibrinogen and platelet aggregation; when associated with S-67." evidence="4">
    <original>C</original>
    <variation>S</variation>
    <location>
        <position position="63"/>
    </location>
</feature>
<feature type="mutagenesis site" description="Abolishes the ability of the protein to interfere with the binding of host integrin to fibrinogen and platelet aggregation. Does not affect the inhibitory activity towards the intrinsic blood coagulation pathway in the host." evidence="4">
    <location>
        <begin position="64"/>
        <end position="66"/>
    </location>
</feature>
<feature type="mutagenesis site" description="Abolishes the ability of the protein to interfere with the binding of host integrin to fibrinogen and platelet aggregation; when associated with S-63." evidence="4">
    <original>C</original>
    <variation>S</variation>
    <location>
        <position position="67"/>
    </location>
</feature>
<feature type="sequence conflict" description="In Ref. 1; BAM69120/BAM69128." evidence="6" ref="1">
    <original>F</original>
    <variation>L</variation>
    <location>
        <position position="7"/>
    </location>
</feature>
<feature type="sequence conflict" description="In Ref. 1; BAM69121." evidence="6" ref="1">
    <original>L</original>
    <variation>P</variation>
    <location>
        <position position="12"/>
    </location>
</feature>
<feature type="sequence conflict" description="In Ref. 1; BAM69127." evidence="6" ref="1">
    <original>L</original>
    <variation>V</variation>
    <location>
        <position position="12"/>
    </location>
</feature>
<feature type="sequence conflict" description="In Ref. 1; BAM69124." evidence="6" ref="1">
    <original>RESV</original>
    <variation>KESA</variation>
    <location>
        <begin position="23"/>
        <end position="26"/>
    </location>
</feature>
<feature type="sequence conflict" description="In Ref. 1; BAM69122/BAM69123/BAM69120/BAM69128/BAM69125/BAM69127/BAM69121." evidence="6" ref="1">
    <original>R</original>
    <variation>K</variation>
    <location>
        <position position="23"/>
    </location>
</feature>
<feature type="sequence conflict" description="In Ref. 1; BAM69121." evidence="6" ref="1">
    <original>A</original>
    <variation>T</variation>
    <location>
        <position position="31"/>
    </location>
</feature>
<feature type="sequence conflict" description="In Ref. 1; BAM69125/BAM69124." evidence="6" ref="1">
    <original>D</original>
    <variation>E</variation>
    <location>
        <position position="50"/>
    </location>
</feature>
<feature type="sequence conflict" description="In Ref. 1; BAM69124." evidence="6" ref="1">
    <original>Q</original>
    <variation>R</variation>
    <location>
        <position position="55"/>
    </location>
</feature>
<protein>
    <recommendedName>
        <fullName evidence="5">Ayadualin</fullName>
    </recommendedName>
    <alternativeName>
        <fullName evidence="5">RGD-containing peptide</fullName>
    </alternativeName>
</protein>
<organism>
    <name type="scientific">Lutzomyia ayacuchensis</name>
    <name type="common">Sand fly</name>
    <dbReference type="NCBI Taxonomy" id="252632"/>
    <lineage>
        <taxon>Eukaryota</taxon>
        <taxon>Metazoa</taxon>
        <taxon>Ecdysozoa</taxon>
        <taxon>Arthropoda</taxon>
        <taxon>Hexapoda</taxon>
        <taxon>Insecta</taxon>
        <taxon>Pterygota</taxon>
        <taxon>Neoptera</taxon>
        <taxon>Endopterygota</taxon>
        <taxon>Diptera</taxon>
        <taxon>Nematocera</taxon>
        <taxon>Psychodoidea</taxon>
        <taxon>Psychodidae</taxon>
        <taxon>Lutzomyia</taxon>
        <taxon>Helcocyrtomyia</taxon>
    </lineage>
</organism>
<evidence type="ECO:0000255" key="1"/>
<evidence type="ECO:0000256" key="2">
    <source>
        <dbReference type="SAM" id="MobiDB-lite"/>
    </source>
</evidence>
<evidence type="ECO:0000269" key="3">
    <source>
    </source>
</evidence>
<evidence type="ECO:0000269" key="4">
    <source>
    </source>
</evidence>
<evidence type="ECO:0000303" key="5">
    <source>
    </source>
</evidence>
<evidence type="ECO:0000305" key="6"/>
<evidence type="ECO:0000312" key="7">
    <source>
        <dbReference type="EMBL" id="BAM69120.1"/>
    </source>
</evidence>
<evidence type="ECO:0000312" key="8">
    <source>
        <dbReference type="EMBL" id="BAM69122.1"/>
    </source>
</evidence>
<evidence type="ECO:0000312" key="9">
    <source>
        <dbReference type="EMBL" id="BAM69123.1"/>
    </source>
</evidence>
<evidence type="ECO:0000312" key="10">
    <source>
        <dbReference type="EMBL" id="BAM69124.1"/>
    </source>
</evidence>
<evidence type="ECO:0000312" key="11">
    <source>
        <dbReference type="EMBL" id="BAM69125.1"/>
    </source>
</evidence>
<evidence type="ECO:0000312" key="12">
    <source>
        <dbReference type="EMBL" id="BAM69126.1"/>
    </source>
</evidence>
<evidence type="ECO:0000312" key="13">
    <source>
        <dbReference type="EMBL" id="BAM69128.1"/>
    </source>
</evidence>
<reference evidence="7 8 9 10 11 12 13" key="1">
    <citation type="journal article" date="2013" name="Infect. Genet. Evol.">
        <title>Analysis of salivary gland transcripts of the sand fly Lutzomyia ayacuchensis, a vector of Andean-type cutaneous leishmaniasis.</title>
        <authorList>
            <person name="Kato H."/>
            <person name="Jochim R.C."/>
            <person name="Gomez E.A."/>
            <person name="Uezato H."/>
            <person name="Mimori T."/>
            <person name="Korenaga M."/>
            <person name="Sakurai T."/>
            <person name="Katakura K."/>
            <person name="Valenzuela J.G."/>
            <person name="Hashiguchi Y."/>
        </authorList>
    </citation>
    <scope>NUCLEOTIDE SEQUENCE [LARGE SCALE MRNA]</scope>
    <scope>TISSUE SPECIFICITY</scope>
    <source>
        <tissue evidence="12">Salivary gland</tissue>
    </source>
</reference>
<reference evidence="6" key="2">
    <citation type="journal article" date="2015" name="Biochimie">
        <title>Ayadualin, a novel RGD peptide with dual antihemostatic activities from the sand fly Lutzomyia ayacuchensis, a vector of Andean-type cutaneous leishmaniasis.</title>
        <authorList>
            <person name="Kato H."/>
            <person name="Gomez E.A."/>
            <person name="Fujita M."/>
            <person name="Ishimaru Y."/>
            <person name="Uezato H."/>
            <person name="Mimori T."/>
            <person name="Iwata H."/>
            <person name="Hashiguchi Y."/>
        </authorList>
    </citation>
    <scope>FUNCTION</scope>
    <scope>INTEGRIN-BINDING MOTIF</scope>
    <scope>MUTAGENESIS OF CYS-63; 64-ARG--ASP-66 AND CYS-67</scope>
</reference>
<keyword id="KW-1203">Blood coagulation cascade inhibiting toxin</keyword>
<keyword id="KW-1199">Hemostasis impairing toxin</keyword>
<keyword id="KW-1201">Platelet aggregation inhibiting toxin</keyword>
<keyword id="KW-0964">Secreted</keyword>
<keyword id="KW-0732">Signal</keyword>
<keyword id="KW-0800">Toxin</keyword>